<name>DADA_SALDC</name>
<reference key="1">
    <citation type="journal article" date="2011" name="J. Bacteriol.">
        <title>Comparative genomics of 28 Salmonella enterica isolates: evidence for CRISPR-mediated adaptive sublineage evolution.</title>
        <authorList>
            <person name="Fricke W.F."/>
            <person name="Mammel M.K."/>
            <person name="McDermott P.F."/>
            <person name="Tartera C."/>
            <person name="White D.G."/>
            <person name="Leclerc J.E."/>
            <person name="Ravel J."/>
            <person name="Cebula T.A."/>
        </authorList>
    </citation>
    <scope>NUCLEOTIDE SEQUENCE [LARGE SCALE GENOMIC DNA]</scope>
    <source>
        <strain>CT_02021853</strain>
    </source>
</reference>
<accession>B5FTN1</accession>
<evidence type="ECO:0000255" key="1">
    <source>
        <dbReference type="HAMAP-Rule" id="MF_01202"/>
    </source>
</evidence>
<proteinExistence type="inferred from homology"/>
<protein>
    <recommendedName>
        <fullName evidence="1">D-amino acid dehydrogenase</fullName>
        <ecNumber evidence="1">1.4.99.-</ecNumber>
    </recommendedName>
</protein>
<comment type="function">
    <text evidence="1">Oxidative deamination of D-amino acids.</text>
</comment>
<comment type="catalytic activity">
    <reaction evidence="1">
        <text>a D-alpha-amino acid + A + H2O = a 2-oxocarboxylate + AH2 + NH4(+)</text>
        <dbReference type="Rhea" id="RHEA:18125"/>
        <dbReference type="ChEBI" id="CHEBI:13193"/>
        <dbReference type="ChEBI" id="CHEBI:15377"/>
        <dbReference type="ChEBI" id="CHEBI:17499"/>
        <dbReference type="ChEBI" id="CHEBI:28938"/>
        <dbReference type="ChEBI" id="CHEBI:35179"/>
        <dbReference type="ChEBI" id="CHEBI:59871"/>
    </reaction>
</comment>
<comment type="cofactor">
    <cofactor evidence="1">
        <name>FAD</name>
        <dbReference type="ChEBI" id="CHEBI:57692"/>
    </cofactor>
</comment>
<comment type="pathway">
    <text>Amino-acid degradation; D-alanine degradation; NH(3) and pyruvate from D-alanine: step 1/1.</text>
</comment>
<comment type="similarity">
    <text evidence="1">Belongs to the DadA oxidoreductase family.</text>
</comment>
<organism>
    <name type="scientific">Salmonella dublin (strain CT_02021853)</name>
    <dbReference type="NCBI Taxonomy" id="439851"/>
    <lineage>
        <taxon>Bacteria</taxon>
        <taxon>Pseudomonadati</taxon>
        <taxon>Pseudomonadota</taxon>
        <taxon>Gammaproteobacteria</taxon>
        <taxon>Enterobacterales</taxon>
        <taxon>Enterobacteriaceae</taxon>
        <taxon>Salmonella</taxon>
    </lineage>
</organism>
<gene>
    <name evidence="1" type="primary">dadA</name>
    <name type="ordered locus">SeD_A1515</name>
</gene>
<dbReference type="EC" id="1.4.99.-" evidence="1"/>
<dbReference type="EMBL" id="CP001144">
    <property type="protein sequence ID" value="ACH77063.1"/>
    <property type="molecule type" value="Genomic_DNA"/>
</dbReference>
<dbReference type="RefSeq" id="WP_001266937.1">
    <property type="nucleotide sequence ID" value="NC_011205.1"/>
</dbReference>
<dbReference type="SMR" id="B5FTN1"/>
<dbReference type="KEGG" id="sed:SeD_A1515"/>
<dbReference type="HOGENOM" id="CLU_007884_9_2_6"/>
<dbReference type="UniPathway" id="UPA00043">
    <property type="reaction ID" value="UER00498"/>
</dbReference>
<dbReference type="Proteomes" id="UP000008322">
    <property type="component" value="Chromosome"/>
</dbReference>
<dbReference type="GO" id="GO:0005737">
    <property type="term" value="C:cytoplasm"/>
    <property type="evidence" value="ECO:0007669"/>
    <property type="project" value="TreeGrafter"/>
</dbReference>
<dbReference type="GO" id="GO:0005886">
    <property type="term" value="C:plasma membrane"/>
    <property type="evidence" value="ECO:0007669"/>
    <property type="project" value="TreeGrafter"/>
</dbReference>
<dbReference type="GO" id="GO:0008718">
    <property type="term" value="F:D-amino-acid dehydrogenase activity"/>
    <property type="evidence" value="ECO:0007669"/>
    <property type="project" value="UniProtKB-UniRule"/>
</dbReference>
<dbReference type="GO" id="GO:0055130">
    <property type="term" value="P:D-alanine catabolic process"/>
    <property type="evidence" value="ECO:0007669"/>
    <property type="project" value="UniProtKB-UniPathway"/>
</dbReference>
<dbReference type="FunFam" id="3.50.50.60:FF:000020">
    <property type="entry name" value="D-amino acid dehydrogenase"/>
    <property type="match status" value="1"/>
</dbReference>
<dbReference type="Gene3D" id="3.30.9.10">
    <property type="entry name" value="D-Amino Acid Oxidase, subunit A, domain 2"/>
    <property type="match status" value="1"/>
</dbReference>
<dbReference type="Gene3D" id="3.50.50.60">
    <property type="entry name" value="FAD/NAD(P)-binding domain"/>
    <property type="match status" value="2"/>
</dbReference>
<dbReference type="HAMAP" id="MF_01202">
    <property type="entry name" value="DadA"/>
    <property type="match status" value="1"/>
</dbReference>
<dbReference type="InterPro" id="IPR023080">
    <property type="entry name" value="DadA"/>
</dbReference>
<dbReference type="InterPro" id="IPR006076">
    <property type="entry name" value="FAD-dep_OxRdtase"/>
</dbReference>
<dbReference type="InterPro" id="IPR036188">
    <property type="entry name" value="FAD/NAD-bd_sf"/>
</dbReference>
<dbReference type="NCBIfam" id="NF001933">
    <property type="entry name" value="PRK00711.1"/>
    <property type="match status" value="1"/>
</dbReference>
<dbReference type="PANTHER" id="PTHR13847:SF280">
    <property type="entry name" value="D-AMINO ACID DEHYDROGENASE"/>
    <property type="match status" value="1"/>
</dbReference>
<dbReference type="PANTHER" id="PTHR13847">
    <property type="entry name" value="SARCOSINE DEHYDROGENASE-RELATED"/>
    <property type="match status" value="1"/>
</dbReference>
<dbReference type="Pfam" id="PF01266">
    <property type="entry name" value="DAO"/>
    <property type="match status" value="1"/>
</dbReference>
<dbReference type="SUPFAM" id="SSF54373">
    <property type="entry name" value="FAD-linked reductases, C-terminal domain"/>
    <property type="match status" value="1"/>
</dbReference>
<dbReference type="SUPFAM" id="SSF51905">
    <property type="entry name" value="FAD/NAD(P)-binding domain"/>
    <property type="match status" value="1"/>
</dbReference>
<sequence length="432" mass="47883">MRVVILGSGVVGVTSAWYLSQAGHDVTVIDRESGPAQETSAANAGQISPGYAAPWAAPGVPLKAIKWMFQRHAPLAVRLDGTPFQLKWMWQMLRNCDTRHYMENKGRMVRLAEYSRDCLKTLRAATGIEYEGRQGGTLQLFRTAQQYENATRDIAVLEDAGVPYQLLESSRLAEVEPALAEVAHKLTGGLRLPNDETGDCQLFTQRLARMAEQAGVTFRFNTPVEKLLYENDQIYGVKCADEIIKADAYVMAFGSYSTAMLKGIVDIPVYPLKGYSLTIPIVEPDGAPVSTILDETYKIAITRFDKRIRVGGMAEIVGFNTDLLQPRRETLEMVVRDLFPRGGHIEQATFWTGLRPMTPDGTPVVGRTRYKNLWLNTGHGTLGWTMACGSGQLLSDILSGRTPAIPYDDLSVARYRSDFTPTPPQRLHSAHN</sequence>
<keyword id="KW-0274">FAD</keyword>
<keyword id="KW-0285">Flavoprotein</keyword>
<keyword id="KW-0560">Oxidoreductase</keyword>
<feature type="chain" id="PRO_1000138664" description="D-amino acid dehydrogenase">
    <location>
        <begin position="1"/>
        <end position="432"/>
    </location>
</feature>
<feature type="binding site" evidence="1">
    <location>
        <begin position="3"/>
        <end position="17"/>
    </location>
    <ligand>
        <name>FAD</name>
        <dbReference type="ChEBI" id="CHEBI:57692"/>
    </ligand>
</feature>